<accession>A4QNX6</accession>
<reference key="1">
    <citation type="submission" date="2007-04" db="EMBL/GenBank/DDBJ databases">
        <authorList>
            <consortium name="NIH - Zebrafish Gene Collection (ZGC) project"/>
        </authorList>
    </citation>
    <scope>NUCLEOTIDE SEQUENCE [LARGE SCALE MRNA]</scope>
    <source>
        <tissue>Ovary</tissue>
    </source>
</reference>
<protein>
    <recommendedName>
        <fullName>CTD small phosphatase-like protein 2-B</fullName>
        <shortName>CTDSP-like 2-B</shortName>
        <ecNumber>3.1.3.-</ecNumber>
    </recommendedName>
</protein>
<feature type="chain" id="PRO_0000331469" description="CTD small phosphatase-like protein 2-B">
    <location>
        <begin position="1"/>
        <end position="460"/>
    </location>
</feature>
<feature type="domain" description="FCP1 homology" evidence="2">
    <location>
        <begin position="277"/>
        <end position="436"/>
    </location>
</feature>
<feature type="region of interest" description="Disordered" evidence="3">
    <location>
        <begin position="1"/>
        <end position="31"/>
    </location>
</feature>
<feature type="region of interest" description="Disordered" evidence="3">
    <location>
        <begin position="191"/>
        <end position="231"/>
    </location>
</feature>
<evidence type="ECO:0000250" key="1"/>
<evidence type="ECO:0000255" key="2">
    <source>
        <dbReference type="PROSITE-ProRule" id="PRU00336"/>
    </source>
</evidence>
<evidence type="ECO:0000256" key="3">
    <source>
        <dbReference type="SAM" id="MobiDB-lite"/>
    </source>
</evidence>
<evidence type="ECO:0000305" key="4"/>
<comment type="function">
    <text evidence="1">Probable phosphatase.</text>
</comment>
<comment type="similarity">
    <text evidence="4">Belongs to the CTDSPL2 family.</text>
</comment>
<gene>
    <name type="primary">ctdspl2b</name>
    <name type="synonym">ctdspl2</name>
    <name type="ORF">zgc:162265</name>
</gene>
<name>CTL2B_DANRE</name>
<sequence>MRLRMRKDSQQPTLARRACPARTKRKSSEVEECTGESKALLSSIKKFIHGSSIKVEQDNPAKTSHLSCELITSTPQRKNDLQRKSIYRARRRTSINGETTNHDTNKPNGKLEVTEEVVSSPPRTTLLGTIFSPVFNFFSPANKNASNSPDQVVEAEEIVKQLEMEQVEEMPTCTATSREPLSVPLYTSAMTSAFRPPPTAHTPEQESENTPHPDLPPLTAPGSPATGGYVDASITVPAEGSYEEEWEVFDPYFFIKHVPPLTEEQLTRKPALPLKTRSTPEFSLVLDLDETLVHCSLNELDDAALTFPVLFQDVIYQVYVRLRPFFREFLERMSQIYEIILFTASKKVYADKLLNILDPRKQLVRHRLFREHCVCVQGNYIKDLNILGRDLSKTIIIDNSPQAFAYQLSNGIPIESWFMDRNDSELLKLVPFLEKLVELNEDVRPHVRERFRLHDLLPPD</sequence>
<keyword id="KW-0378">Hydrolase</keyword>
<keyword id="KW-0904">Protein phosphatase</keyword>
<keyword id="KW-1185">Reference proteome</keyword>
<dbReference type="EC" id="3.1.3.-"/>
<dbReference type="EMBL" id="BC139560">
    <property type="protein sequence ID" value="AAI39561.1"/>
    <property type="molecule type" value="mRNA"/>
</dbReference>
<dbReference type="RefSeq" id="NP_001082795.1">
    <property type="nucleotide sequence ID" value="NM_001089326.2"/>
</dbReference>
<dbReference type="SMR" id="A4QNX6"/>
<dbReference type="FunCoup" id="A4QNX6">
    <property type="interactions" value="22"/>
</dbReference>
<dbReference type="STRING" id="7955.ENSDARP00000079940"/>
<dbReference type="PaxDb" id="7955-ENSDARP00000108772"/>
<dbReference type="PeptideAtlas" id="A4QNX6"/>
<dbReference type="Ensembl" id="ENSDART00000085505">
    <property type="protein sequence ID" value="ENSDARP00000079940"/>
    <property type="gene ID" value="ENSDARG00000060586"/>
</dbReference>
<dbReference type="Ensembl" id="ENSDART00000187370">
    <property type="protein sequence ID" value="ENSDARP00000146809"/>
    <property type="gene ID" value="ENSDARG00000060586"/>
</dbReference>
<dbReference type="GeneID" id="323089"/>
<dbReference type="KEGG" id="dre:323089"/>
<dbReference type="AGR" id="ZFIN:ZDB-GENE-030131-1809"/>
<dbReference type="CTD" id="323089"/>
<dbReference type="ZFIN" id="ZDB-GENE-030131-1809">
    <property type="gene designation" value="ctdspl2b"/>
</dbReference>
<dbReference type="eggNOG" id="KOG1605">
    <property type="taxonomic scope" value="Eukaryota"/>
</dbReference>
<dbReference type="HOGENOM" id="CLU_034042_4_0_1"/>
<dbReference type="InParanoid" id="A4QNX6"/>
<dbReference type="OMA" id="NQAIQVR"/>
<dbReference type="OrthoDB" id="277011at2759"/>
<dbReference type="PhylomeDB" id="A4QNX6"/>
<dbReference type="TreeFam" id="TF354278"/>
<dbReference type="PRO" id="PR:A4QNX6"/>
<dbReference type="Proteomes" id="UP000000437">
    <property type="component" value="Chromosome 7"/>
</dbReference>
<dbReference type="Bgee" id="ENSDARG00000060586">
    <property type="expression patterns" value="Expressed in early embryo and 26 other cell types or tissues"/>
</dbReference>
<dbReference type="GO" id="GO:0004721">
    <property type="term" value="F:phosphoprotein phosphatase activity"/>
    <property type="evidence" value="ECO:0000318"/>
    <property type="project" value="GO_Central"/>
</dbReference>
<dbReference type="CDD" id="cd07521">
    <property type="entry name" value="HAD_FCP1-like"/>
    <property type="match status" value="1"/>
</dbReference>
<dbReference type="FunFam" id="3.40.50.1000:FF:000015">
    <property type="entry name" value="CTD small phosphatase-like protein 2"/>
    <property type="match status" value="1"/>
</dbReference>
<dbReference type="Gene3D" id="3.40.50.1000">
    <property type="entry name" value="HAD superfamily/HAD-like"/>
    <property type="match status" value="1"/>
</dbReference>
<dbReference type="InterPro" id="IPR011948">
    <property type="entry name" value="Dullard_phosphatase"/>
</dbReference>
<dbReference type="InterPro" id="IPR004274">
    <property type="entry name" value="FCP1_dom"/>
</dbReference>
<dbReference type="InterPro" id="IPR036412">
    <property type="entry name" value="HAD-like_sf"/>
</dbReference>
<dbReference type="InterPro" id="IPR023214">
    <property type="entry name" value="HAD_sf"/>
</dbReference>
<dbReference type="InterPro" id="IPR050365">
    <property type="entry name" value="TIM50"/>
</dbReference>
<dbReference type="NCBIfam" id="TIGR02251">
    <property type="entry name" value="HIF-SF_euk"/>
    <property type="match status" value="1"/>
</dbReference>
<dbReference type="PANTHER" id="PTHR12210">
    <property type="entry name" value="DULLARD PROTEIN PHOSPHATASE"/>
    <property type="match status" value="1"/>
</dbReference>
<dbReference type="Pfam" id="PF03031">
    <property type="entry name" value="NIF"/>
    <property type="match status" value="1"/>
</dbReference>
<dbReference type="SMART" id="SM00577">
    <property type="entry name" value="CPDc"/>
    <property type="match status" value="1"/>
</dbReference>
<dbReference type="SUPFAM" id="SSF56784">
    <property type="entry name" value="HAD-like"/>
    <property type="match status" value="1"/>
</dbReference>
<dbReference type="PROSITE" id="PS50969">
    <property type="entry name" value="FCP1"/>
    <property type="match status" value="1"/>
</dbReference>
<proteinExistence type="evidence at transcript level"/>
<organism>
    <name type="scientific">Danio rerio</name>
    <name type="common">Zebrafish</name>
    <name type="synonym">Brachydanio rerio</name>
    <dbReference type="NCBI Taxonomy" id="7955"/>
    <lineage>
        <taxon>Eukaryota</taxon>
        <taxon>Metazoa</taxon>
        <taxon>Chordata</taxon>
        <taxon>Craniata</taxon>
        <taxon>Vertebrata</taxon>
        <taxon>Euteleostomi</taxon>
        <taxon>Actinopterygii</taxon>
        <taxon>Neopterygii</taxon>
        <taxon>Teleostei</taxon>
        <taxon>Ostariophysi</taxon>
        <taxon>Cypriniformes</taxon>
        <taxon>Danionidae</taxon>
        <taxon>Danioninae</taxon>
        <taxon>Danio</taxon>
    </lineage>
</organism>